<evidence type="ECO:0000255" key="1">
    <source>
        <dbReference type="HAMAP-Rule" id="MF_00321"/>
    </source>
</evidence>
<accession>A6QHK7</accession>
<feature type="chain" id="PRO_1000072019" description="Probable GTP-binding protein EngB">
    <location>
        <begin position="1"/>
        <end position="196"/>
    </location>
</feature>
<feature type="domain" description="EngB-type G" evidence="1">
    <location>
        <begin position="24"/>
        <end position="196"/>
    </location>
</feature>
<feature type="binding site" evidence="1">
    <location>
        <begin position="32"/>
        <end position="39"/>
    </location>
    <ligand>
        <name>GTP</name>
        <dbReference type="ChEBI" id="CHEBI:37565"/>
    </ligand>
</feature>
<feature type="binding site" evidence="1">
    <location>
        <position position="39"/>
    </location>
    <ligand>
        <name>Mg(2+)</name>
        <dbReference type="ChEBI" id="CHEBI:18420"/>
    </ligand>
</feature>
<feature type="binding site" evidence="1">
    <location>
        <begin position="59"/>
        <end position="63"/>
    </location>
    <ligand>
        <name>GTP</name>
        <dbReference type="ChEBI" id="CHEBI:37565"/>
    </ligand>
</feature>
<feature type="binding site" evidence="1">
    <location>
        <position position="61"/>
    </location>
    <ligand>
        <name>Mg(2+)</name>
        <dbReference type="ChEBI" id="CHEBI:18420"/>
    </ligand>
</feature>
<feature type="binding site" evidence="1">
    <location>
        <begin position="77"/>
        <end position="80"/>
    </location>
    <ligand>
        <name>GTP</name>
        <dbReference type="ChEBI" id="CHEBI:37565"/>
    </ligand>
</feature>
<feature type="binding site" evidence="1">
    <location>
        <begin position="144"/>
        <end position="147"/>
    </location>
    <ligand>
        <name>GTP</name>
        <dbReference type="ChEBI" id="CHEBI:37565"/>
    </ligand>
</feature>
<feature type="binding site" evidence="1">
    <location>
        <begin position="176"/>
        <end position="178"/>
    </location>
    <ligand>
        <name>GTP</name>
        <dbReference type="ChEBI" id="CHEBI:37565"/>
    </ligand>
</feature>
<keyword id="KW-0131">Cell cycle</keyword>
<keyword id="KW-0132">Cell division</keyword>
<keyword id="KW-0342">GTP-binding</keyword>
<keyword id="KW-0460">Magnesium</keyword>
<keyword id="KW-0479">Metal-binding</keyword>
<keyword id="KW-0547">Nucleotide-binding</keyword>
<keyword id="KW-0717">Septation</keyword>
<proteinExistence type="inferred from homology"/>
<comment type="function">
    <text evidence="1">Necessary for normal cell division and for the maintenance of normal septation.</text>
</comment>
<comment type="cofactor">
    <cofactor evidence="1">
        <name>Mg(2+)</name>
        <dbReference type="ChEBI" id="CHEBI:18420"/>
    </cofactor>
</comment>
<comment type="similarity">
    <text evidence="1">Belongs to the TRAFAC class TrmE-Era-EngA-EngB-Septin-like GTPase superfamily. EngB GTPase family.</text>
</comment>
<reference key="1">
    <citation type="journal article" date="2008" name="J. Bacteriol.">
        <title>Genome sequence of Staphylococcus aureus strain Newman and comparative analysis of staphylococcal genomes: polymorphism and evolution of two major pathogenicity islands.</title>
        <authorList>
            <person name="Baba T."/>
            <person name="Bae T."/>
            <person name="Schneewind O."/>
            <person name="Takeuchi F."/>
            <person name="Hiramatsu K."/>
        </authorList>
    </citation>
    <scope>NUCLEOTIDE SEQUENCE [LARGE SCALE GENOMIC DNA]</scope>
    <source>
        <strain>Newman</strain>
    </source>
</reference>
<organism>
    <name type="scientific">Staphylococcus aureus (strain Newman)</name>
    <dbReference type="NCBI Taxonomy" id="426430"/>
    <lineage>
        <taxon>Bacteria</taxon>
        <taxon>Bacillati</taxon>
        <taxon>Bacillota</taxon>
        <taxon>Bacilli</taxon>
        <taxon>Bacillales</taxon>
        <taxon>Staphylococcaceae</taxon>
        <taxon>Staphylococcus</taxon>
    </lineage>
</organism>
<sequence length="196" mass="22685">MKVNPNNIELIISAVKEEQYPETELSEVALSGRSNVGKSTFINSMIGRKNMARTSQQPGKTQTLNFYNIDEQLIFVDVPGYGYAKVSKTQREKFGKMIEEYITKRENLQLVIQLVDLRHDPTQDDILMYNYLKHFDIPTLVICTKEDKIPKGKVQKHIKNIKTQLDMDPDDTIVSYSSIQNNKQQQIWNLIEPYIS</sequence>
<name>ENGB_STAAE</name>
<gene>
    <name evidence="1" type="primary">engB</name>
    <name type="ordered locus">NWMN_1567</name>
</gene>
<protein>
    <recommendedName>
        <fullName evidence="1">Probable GTP-binding protein EngB</fullName>
    </recommendedName>
</protein>
<dbReference type="EMBL" id="AP009351">
    <property type="protein sequence ID" value="BAF67839.1"/>
    <property type="molecule type" value="Genomic_DNA"/>
</dbReference>
<dbReference type="SMR" id="A6QHK7"/>
<dbReference type="KEGG" id="sae:NWMN_1567"/>
<dbReference type="HOGENOM" id="CLU_033732_3_0_9"/>
<dbReference type="Proteomes" id="UP000006386">
    <property type="component" value="Chromosome"/>
</dbReference>
<dbReference type="GO" id="GO:0005829">
    <property type="term" value="C:cytosol"/>
    <property type="evidence" value="ECO:0007669"/>
    <property type="project" value="TreeGrafter"/>
</dbReference>
<dbReference type="GO" id="GO:0005525">
    <property type="term" value="F:GTP binding"/>
    <property type="evidence" value="ECO:0007669"/>
    <property type="project" value="UniProtKB-UniRule"/>
</dbReference>
<dbReference type="GO" id="GO:0046872">
    <property type="term" value="F:metal ion binding"/>
    <property type="evidence" value="ECO:0007669"/>
    <property type="project" value="UniProtKB-KW"/>
</dbReference>
<dbReference type="GO" id="GO:0000917">
    <property type="term" value="P:division septum assembly"/>
    <property type="evidence" value="ECO:0007669"/>
    <property type="project" value="UniProtKB-KW"/>
</dbReference>
<dbReference type="CDD" id="cd01876">
    <property type="entry name" value="YihA_EngB"/>
    <property type="match status" value="1"/>
</dbReference>
<dbReference type="FunFam" id="3.40.50.300:FF:000098">
    <property type="entry name" value="Probable GTP-binding protein EngB"/>
    <property type="match status" value="1"/>
</dbReference>
<dbReference type="Gene3D" id="3.40.50.300">
    <property type="entry name" value="P-loop containing nucleotide triphosphate hydrolases"/>
    <property type="match status" value="1"/>
</dbReference>
<dbReference type="HAMAP" id="MF_00321">
    <property type="entry name" value="GTPase_EngB"/>
    <property type="match status" value="1"/>
</dbReference>
<dbReference type="InterPro" id="IPR030393">
    <property type="entry name" value="G_ENGB_dom"/>
</dbReference>
<dbReference type="InterPro" id="IPR006073">
    <property type="entry name" value="GTP-bd"/>
</dbReference>
<dbReference type="InterPro" id="IPR019987">
    <property type="entry name" value="GTP-bd_ribosome_bio_YsxC"/>
</dbReference>
<dbReference type="InterPro" id="IPR027417">
    <property type="entry name" value="P-loop_NTPase"/>
</dbReference>
<dbReference type="NCBIfam" id="TIGR03598">
    <property type="entry name" value="GTPase_YsxC"/>
    <property type="match status" value="1"/>
</dbReference>
<dbReference type="PANTHER" id="PTHR11649:SF13">
    <property type="entry name" value="ENGB-TYPE G DOMAIN-CONTAINING PROTEIN"/>
    <property type="match status" value="1"/>
</dbReference>
<dbReference type="PANTHER" id="PTHR11649">
    <property type="entry name" value="MSS1/TRME-RELATED GTP-BINDING PROTEIN"/>
    <property type="match status" value="1"/>
</dbReference>
<dbReference type="Pfam" id="PF01926">
    <property type="entry name" value="MMR_HSR1"/>
    <property type="match status" value="1"/>
</dbReference>
<dbReference type="SUPFAM" id="SSF52540">
    <property type="entry name" value="P-loop containing nucleoside triphosphate hydrolases"/>
    <property type="match status" value="1"/>
</dbReference>
<dbReference type="PROSITE" id="PS51706">
    <property type="entry name" value="G_ENGB"/>
    <property type="match status" value="1"/>
</dbReference>